<feature type="chain" id="PRO_0000413455" description="Putative alpha-neurotoxin RjAa44">
    <location>
        <begin position="1"/>
        <end position="66"/>
    </location>
</feature>
<feature type="domain" description="LCN-type CS-alpha/beta" evidence="4">
    <location>
        <begin position="1"/>
        <end position="60"/>
    </location>
</feature>
<feature type="disulfide bond" evidence="4">
    <location>
        <begin position="11"/>
        <end position="59"/>
    </location>
</feature>
<feature type="disulfide bond" evidence="4">
    <location>
        <begin position="15"/>
        <end position="35"/>
    </location>
</feature>
<feature type="disulfide bond" evidence="4">
    <location>
        <begin position="21"/>
        <end position="42"/>
    </location>
</feature>
<feature type="disulfide bond" evidence="4">
    <location>
        <begin position="25"/>
        <end position="44"/>
    </location>
</feature>
<feature type="non-terminal residue" evidence="7">
    <location>
        <position position="1"/>
    </location>
</feature>
<sequence>KEGYPVDWGNCKYECMSDAYCKDLCADRKAKSGYCYKLNWSCYCEGLPDDSPIKTNGHCRPGGRRK</sequence>
<name>SCX44_RHOJU</name>
<evidence type="ECO:0000250" key="1"/>
<evidence type="ECO:0000250" key="2">
    <source>
        <dbReference type="UniProtKB" id="P46066"/>
    </source>
</evidence>
<evidence type="ECO:0000255" key="3"/>
<evidence type="ECO:0000255" key="4">
    <source>
        <dbReference type="PROSITE-ProRule" id="PRU01210"/>
    </source>
</evidence>
<evidence type="ECO:0000305" key="5"/>
<evidence type="ECO:0000305" key="6">
    <source>
    </source>
</evidence>
<evidence type="ECO:0000312" key="7">
    <source>
        <dbReference type="EMBL" id="ADV16826.1"/>
    </source>
</evidence>
<organism>
    <name type="scientific">Rhopalurus junceus</name>
    <name type="common">Caribbean blue scorpion</name>
    <dbReference type="NCBI Taxonomy" id="419285"/>
    <lineage>
        <taxon>Eukaryota</taxon>
        <taxon>Metazoa</taxon>
        <taxon>Ecdysozoa</taxon>
        <taxon>Arthropoda</taxon>
        <taxon>Chelicerata</taxon>
        <taxon>Arachnida</taxon>
        <taxon>Scorpiones</taxon>
        <taxon>Buthida</taxon>
        <taxon>Buthoidea</taxon>
        <taxon>Buthidae</taxon>
        <taxon>Rhopalurus</taxon>
    </lineage>
</organism>
<keyword id="KW-1015">Disulfide bond</keyword>
<keyword id="KW-0872">Ion channel impairing toxin</keyword>
<keyword id="KW-0528">Neurotoxin</keyword>
<keyword id="KW-0964">Secreted</keyword>
<keyword id="KW-0800">Toxin</keyword>
<keyword id="KW-0738">Voltage-gated sodium channel impairing toxin</keyword>
<proteinExistence type="evidence at transcript level"/>
<dbReference type="EMBL" id="HM233948">
    <property type="protein sequence ID" value="ADV16826.1"/>
    <property type="molecule type" value="mRNA"/>
</dbReference>
<dbReference type="SMR" id="E7CLN9"/>
<dbReference type="GO" id="GO:0005576">
    <property type="term" value="C:extracellular region"/>
    <property type="evidence" value="ECO:0007669"/>
    <property type="project" value="UniProtKB-SubCell"/>
</dbReference>
<dbReference type="GO" id="GO:0019871">
    <property type="term" value="F:sodium channel inhibitor activity"/>
    <property type="evidence" value="ECO:0007669"/>
    <property type="project" value="InterPro"/>
</dbReference>
<dbReference type="GO" id="GO:0090729">
    <property type="term" value="F:toxin activity"/>
    <property type="evidence" value="ECO:0007669"/>
    <property type="project" value="UniProtKB-KW"/>
</dbReference>
<dbReference type="GO" id="GO:0006952">
    <property type="term" value="P:defense response"/>
    <property type="evidence" value="ECO:0007669"/>
    <property type="project" value="InterPro"/>
</dbReference>
<dbReference type="CDD" id="cd23106">
    <property type="entry name" value="neurotoxins_LC_scorpion"/>
    <property type="match status" value="1"/>
</dbReference>
<dbReference type="Gene3D" id="3.30.30.10">
    <property type="entry name" value="Knottin, scorpion toxin-like"/>
    <property type="match status" value="1"/>
</dbReference>
<dbReference type="InterPro" id="IPR044062">
    <property type="entry name" value="LCN-type_CS_alpha_beta_dom"/>
</dbReference>
<dbReference type="InterPro" id="IPR003614">
    <property type="entry name" value="Scorpion_toxin-like"/>
</dbReference>
<dbReference type="InterPro" id="IPR036574">
    <property type="entry name" value="Scorpion_toxin-like_sf"/>
</dbReference>
<dbReference type="InterPro" id="IPR018218">
    <property type="entry name" value="Scorpion_toxinL"/>
</dbReference>
<dbReference type="InterPro" id="IPR002061">
    <property type="entry name" value="Scorpion_toxinL/defensin"/>
</dbReference>
<dbReference type="Pfam" id="PF00537">
    <property type="entry name" value="Toxin_3"/>
    <property type="match status" value="1"/>
</dbReference>
<dbReference type="PRINTS" id="PR00285">
    <property type="entry name" value="SCORPNTOXIN"/>
</dbReference>
<dbReference type="SMART" id="SM00505">
    <property type="entry name" value="Knot1"/>
    <property type="match status" value="1"/>
</dbReference>
<dbReference type="SUPFAM" id="SSF57095">
    <property type="entry name" value="Scorpion toxin-like"/>
    <property type="match status" value="1"/>
</dbReference>
<dbReference type="PROSITE" id="PS51863">
    <property type="entry name" value="LCN_CSAB"/>
    <property type="match status" value="1"/>
</dbReference>
<accession>E7CLN9</accession>
<comment type="function">
    <text evidence="1">Alpha toxins bind voltage-independently at site-3 of sodium channels (Nav) and inhibit the inactivation of the activated channels, thereby blocking neuronal transmission.</text>
</comment>
<comment type="subcellular location">
    <subcellularLocation>
        <location evidence="2">Secreted</location>
    </subcellularLocation>
</comment>
<comment type="tissue specificity">
    <text evidence="6">Expressed by the venom gland.</text>
</comment>
<comment type="domain">
    <text evidence="5">Has the structural arrangement of an alpha-helix connected to antiparallel beta-sheets by disulfide bonds (CS-alpha/beta).</text>
</comment>
<comment type="similarity">
    <text evidence="3">Belongs to the long (4 C-C) scorpion toxin superfamily. Sodium channel inhibitor family. Alpha subfamily.</text>
</comment>
<reference key="1">
    <citation type="journal article" date="2011" name="Toxicon">
        <title>Biochemical and molecular characterization of the venom from the Cuban scorpion Rhopalurus junceus.</title>
        <authorList>
            <person name="Garcia-Gomez B.I."/>
            <person name="Coronas F.I."/>
            <person name="Restano-Cassulini R."/>
            <person name="Rodriguez R.R."/>
            <person name="Possani L.D."/>
        </authorList>
    </citation>
    <scope>NUCLEOTIDE SEQUENCE [MRNA]</scope>
    <source>
        <tissue>Venom gland</tissue>
    </source>
</reference>
<protein>
    <recommendedName>
        <fullName evidence="6">Putative alpha-neurotoxin RjAa44</fullName>
    </recommendedName>
</protein>